<name>HFQ_RHIE6</name>
<protein>
    <recommendedName>
        <fullName evidence="1">RNA-binding protein Hfq</fullName>
    </recommendedName>
</protein>
<proteinExistence type="inferred from homology"/>
<reference key="1">
    <citation type="journal article" date="2010" name="Appl. Environ. Microbiol.">
        <title>Conserved symbiotic plasmid DNA sequences in the multireplicon pangenomic structure of Rhizobium etli.</title>
        <authorList>
            <person name="Gonzalez V."/>
            <person name="Acosta J.L."/>
            <person name="Santamaria R.I."/>
            <person name="Bustos P."/>
            <person name="Fernandez J.L."/>
            <person name="Hernandez Gonzalez I.L."/>
            <person name="Diaz R."/>
            <person name="Flores M."/>
            <person name="Palacios R."/>
            <person name="Mora J."/>
            <person name="Davila G."/>
        </authorList>
    </citation>
    <scope>NUCLEOTIDE SEQUENCE [LARGE SCALE GENOMIC DNA]</scope>
    <source>
        <strain>CIAT 652</strain>
    </source>
</reference>
<feature type="chain" id="PRO_1000190347" description="RNA-binding protein Hfq">
    <location>
        <begin position="1"/>
        <end position="80"/>
    </location>
</feature>
<feature type="domain" description="Sm" evidence="2">
    <location>
        <begin position="10"/>
        <end position="70"/>
    </location>
</feature>
<evidence type="ECO:0000255" key="1">
    <source>
        <dbReference type="HAMAP-Rule" id="MF_00436"/>
    </source>
</evidence>
<evidence type="ECO:0000255" key="2">
    <source>
        <dbReference type="PROSITE-ProRule" id="PRU01346"/>
    </source>
</evidence>
<comment type="function">
    <text evidence="1">RNA chaperone that binds small regulatory RNA (sRNAs) and mRNAs to facilitate mRNA translational regulation in response to envelope stress, environmental stress and changes in metabolite concentrations. Also binds with high specificity to tRNAs.</text>
</comment>
<comment type="subunit">
    <text evidence="1">Homohexamer.</text>
</comment>
<comment type="similarity">
    <text evidence="1">Belongs to the Hfq family.</text>
</comment>
<keyword id="KW-0694">RNA-binding</keyword>
<keyword id="KW-0346">Stress response</keyword>
<accession>B3PYU7</accession>
<organism>
    <name type="scientific">Rhizobium etli (strain CIAT 652)</name>
    <dbReference type="NCBI Taxonomy" id="491916"/>
    <lineage>
        <taxon>Bacteria</taxon>
        <taxon>Pseudomonadati</taxon>
        <taxon>Pseudomonadota</taxon>
        <taxon>Alphaproteobacteria</taxon>
        <taxon>Hyphomicrobiales</taxon>
        <taxon>Rhizobiaceae</taxon>
        <taxon>Rhizobium/Agrobacterium group</taxon>
        <taxon>Rhizobium</taxon>
    </lineage>
</organism>
<gene>
    <name evidence="1" type="primary">hfq</name>
    <name type="ordered locus">RHECIAT_CH0002066</name>
</gene>
<dbReference type="EMBL" id="CP001074">
    <property type="protein sequence ID" value="ACE91026.1"/>
    <property type="molecule type" value="Genomic_DNA"/>
</dbReference>
<dbReference type="SMR" id="B3PYU7"/>
<dbReference type="KEGG" id="rec:RHECIAT_CH0002066"/>
<dbReference type="eggNOG" id="COG1923">
    <property type="taxonomic scope" value="Bacteria"/>
</dbReference>
<dbReference type="HOGENOM" id="CLU_113688_0_0_5"/>
<dbReference type="Proteomes" id="UP000008817">
    <property type="component" value="Chromosome"/>
</dbReference>
<dbReference type="GO" id="GO:0005829">
    <property type="term" value="C:cytosol"/>
    <property type="evidence" value="ECO:0007669"/>
    <property type="project" value="TreeGrafter"/>
</dbReference>
<dbReference type="GO" id="GO:0003723">
    <property type="term" value="F:RNA binding"/>
    <property type="evidence" value="ECO:0007669"/>
    <property type="project" value="UniProtKB-UniRule"/>
</dbReference>
<dbReference type="GO" id="GO:0006355">
    <property type="term" value="P:regulation of DNA-templated transcription"/>
    <property type="evidence" value="ECO:0007669"/>
    <property type="project" value="InterPro"/>
</dbReference>
<dbReference type="GO" id="GO:0043487">
    <property type="term" value="P:regulation of RNA stability"/>
    <property type="evidence" value="ECO:0007669"/>
    <property type="project" value="TreeGrafter"/>
</dbReference>
<dbReference type="GO" id="GO:0045974">
    <property type="term" value="P:regulation of translation, ncRNA-mediated"/>
    <property type="evidence" value="ECO:0007669"/>
    <property type="project" value="TreeGrafter"/>
</dbReference>
<dbReference type="CDD" id="cd01716">
    <property type="entry name" value="Hfq"/>
    <property type="match status" value="1"/>
</dbReference>
<dbReference type="Gene3D" id="2.30.30.100">
    <property type="match status" value="1"/>
</dbReference>
<dbReference type="HAMAP" id="MF_00436">
    <property type="entry name" value="Hfq"/>
    <property type="match status" value="1"/>
</dbReference>
<dbReference type="InterPro" id="IPR005001">
    <property type="entry name" value="Hfq"/>
</dbReference>
<dbReference type="InterPro" id="IPR010920">
    <property type="entry name" value="LSM_dom_sf"/>
</dbReference>
<dbReference type="InterPro" id="IPR047575">
    <property type="entry name" value="Sm"/>
</dbReference>
<dbReference type="NCBIfam" id="TIGR02383">
    <property type="entry name" value="Hfq"/>
    <property type="match status" value="1"/>
</dbReference>
<dbReference type="NCBIfam" id="NF001602">
    <property type="entry name" value="PRK00395.1"/>
    <property type="match status" value="1"/>
</dbReference>
<dbReference type="PANTHER" id="PTHR34772">
    <property type="entry name" value="RNA-BINDING PROTEIN HFQ"/>
    <property type="match status" value="1"/>
</dbReference>
<dbReference type="PANTHER" id="PTHR34772:SF1">
    <property type="entry name" value="RNA-BINDING PROTEIN HFQ"/>
    <property type="match status" value="1"/>
</dbReference>
<dbReference type="Pfam" id="PF17209">
    <property type="entry name" value="Hfq"/>
    <property type="match status" value="1"/>
</dbReference>
<dbReference type="SUPFAM" id="SSF50182">
    <property type="entry name" value="Sm-like ribonucleoproteins"/>
    <property type="match status" value="1"/>
</dbReference>
<dbReference type="PROSITE" id="PS52002">
    <property type="entry name" value="SM"/>
    <property type="match status" value="1"/>
</dbReference>
<sequence>MAERSQNLQDLFLNTVRKQKISLTIFLINGVKLTGVVTSFDNFCVLLRRDGHSQLVYKHAISTIMPGQPMQMFESEEAAS</sequence>